<organism>
    <name type="scientific">Burkholderia multivorans (strain ATCC 17616 / 249)</name>
    <dbReference type="NCBI Taxonomy" id="395019"/>
    <lineage>
        <taxon>Bacteria</taxon>
        <taxon>Pseudomonadati</taxon>
        <taxon>Pseudomonadota</taxon>
        <taxon>Betaproteobacteria</taxon>
        <taxon>Burkholderiales</taxon>
        <taxon>Burkholderiaceae</taxon>
        <taxon>Burkholderia</taxon>
        <taxon>Burkholderia cepacia complex</taxon>
    </lineage>
</organism>
<proteinExistence type="inferred from homology"/>
<sequence length="131" mass="14227">MSMSDPIADMLTRIRNAQMVEKVSVAMPSSKVKVAIAQVLKDEGYIDDFAVKTEGAKAELNIALKYYAGRPVIERLERVSKPGLRVYRGRNEIPQVMNGLGVAIVSTPKGVMTDRKARATGVGGEVICYVA</sequence>
<accession>A9ADK7</accession>
<evidence type="ECO:0000255" key="1">
    <source>
        <dbReference type="HAMAP-Rule" id="MF_01302"/>
    </source>
</evidence>
<evidence type="ECO:0000305" key="2"/>
<keyword id="KW-1185">Reference proteome</keyword>
<keyword id="KW-0687">Ribonucleoprotein</keyword>
<keyword id="KW-0689">Ribosomal protein</keyword>
<keyword id="KW-0694">RNA-binding</keyword>
<keyword id="KW-0699">rRNA-binding</keyword>
<dbReference type="EMBL" id="CP000868">
    <property type="protein sequence ID" value="ABX13958.1"/>
    <property type="molecule type" value="Genomic_DNA"/>
</dbReference>
<dbReference type="EMBL" id="AP009385">
    <property type="protein sequence ID" value="BAG44876.1"/>
    <property type="molecule type" value="Genomic_DNA"/>
</dbReference>
<dbReference type="RefSeq" id="WP_006400647.1">
    <property type="nucleotide sequence ID" value="NC_010804.1"/>
</dbReference>
<dbReference type="SMR" id="A9ADK7"/>
<dbReference type="STRING" id="395019.BMULJ_02991"/>
<dbReference type="GeneID" id="89568655"/>
<dbReference type="KEGG" id="bmj:BMULJ_02991"/>
<dbReference type="KEGG" id="bmu:Bmul_0263"/>
<dbReference type="eggNOG" id="COG0096">
    <property type="taxonomic scope" value="Bacteria"/>
</dbReference>
<dbReference type="HOGENOM" id="CLU_098428_0_0_4"/>
<dbReference type="Proteomes" id="UP000008815">
    <property type="component" value="Chromosome 1"/>
</dbReference>
<dbReference type="GO" id="GO:1990904">
    <property type="term" value="C:ribonucleoprotein complex"/>
    <property type="evidence" value="ECO:0007669"/>
    <property type="project" value="UniProtKB-KW"/>
</dbReference>
<dbReference type="GO" id="GO:0005840">
    <property type="term" value="C:ribosome"/>
    <property type="evidence" value="ECO:0007669"/>
    <property type="project" value="UniProtKB-KW"/>
</dbReference>
<dbReference type="GO" id="GO:0019843">
    <property type="term" value="F:rRNA binding"/>
    <property type="evidence" value="ECO:0007669"/>
    <property type="project" value="UniProtKB-UniRule"/>
</dbReference>
<dbReference type="GO" id="GO:0003735">
    <property type="term" value="F:structural constituent of ribosome"/>
    <property type="evidence" value="ECO:0007669"/>
    <property type="project" value="InterPro"/>
</dbReference>
<dbReference type="GO" id="GO:0006412">
    <property type="term" value="P:translation"/>
    <property type="evidence" value="ECO:0007669"/>
    <property type="project" value="UniProtKB-UniRule"/>
</dbReference>
<dbReference type="FunFam" id="3.30.1370.30:FF:000003">
    <property type="entry name" value="30S ribosomal protein S8"/>
    <property type="match status" value="1"/>
</dbReference>
<dbReference type="FunFam" id="3.30.1490.10:FF:000001">
    <property type="entry name" value="30S ribosomal protein S8"/>
    <property type="match status" value="1"/>
</dbReference>
<dbReference type="Gene3D" id="3.30.1370.30">
    <property type="match status" value="1"/>
</dbReference>
<dbReference type="Gene3D" id="3.30.1490.10">
    <property type="match status" value="1"/>
</dbReference>
<dbReference type="HAMAP" id="MF_01302_B">
    <property type="entry name" value="Ribosomal_uS8_B"/>
    <property type="match status" value="1"/>
</dbReference>
<dbReference type="InterPro" id="IPR000630">
    <property type="entry name" value="Ribosomal_uS8"/>
</dbReference>
<dbReference type="InterPro" id="IPR047863">
    <property type="entry name" value="Ribosomal_uS8_CS"/>
</dbReference>
<dbReference type="InterPro" id="IPR035987">
    <property type="entry name" value="Ribosomal_uS8_sf"/>
</dbReference>
<dbReference type="NCBIfam" id="NF001109">
    <property type="entry name" value="PRK00136.1"/>
    <property type="match status" value="1"/>
</dbReference>
<dbReference type="PANTHER" id="PTHR11758">
    <property type="entry name" value="40S RIBOSOMAL PROTEIN S15A"/>
    <property type="match status" value="1"/>
</dbReference>
<dbReference type="Pfam" id="PF00410">
    <property type="entry name" value="Ribosomal_S8"/>
    <property type="match status" value="1"/>
</dbReference>
<dbReference type="SUPFAM" id="SSF56047">
    <property type="entry name" value="Ribosomal protein S8"/>
    <property type="match status" value="1"/>
</dbReference>
<dbReference type="PROSITE" id="PS00053">
    <property type="entry name" value="RIBOSOMAL_S8"/>
    <property type="match status" value="1"/>
</dbReference>
<gene>
    <name evidence="1" type="primary">rpsH</name>
    <name type="ordered locus">Bmul_0263</name>
    <name type="ordered locus">BMULJ_02991</name>
</gene>
<feature type="chain" id="PRO_1000140524" description="Small ribosomal subunit protein uS8">
    <location>
        <begin position="1"/>
        <end position="131"/>
    </location>
</feature>
<reference key="1">
    <citation type="submission" date="2007-10" db="EMBL/GenBank/DDBJ databases">
        <title>Complete sequence of chromosome 1 of Burkholderia multivorans ATCC 17616.</title>
        <authorList>
            <person name="Copeland A."/>
            <person name="Lucas S."/>
            <person name="Lapidus A."/>
            <person name="Barry K."/>
            <person name="Glavina del Rio T."/>
            <person name="Dalin E."/>
            <person name="Tice H."/>
            <person name="Pitluck S."/>
            <person name="Chain P."/>
            <person name="Malfatti S."/>
            <person name="Shin M."/>
            <person name="Vergez L."/>
            <person name="Schmutz J."/>
            <person name="Larimer F."/>
            <person name="Land M."/>
            <person name="Hauser L."/>
            <person name="Kyrpides N."/>
            <person name="Kim E."/>
            <person name="Tiedje J."/>
            <person name="Richardson P."/>
        </authorList>
    </citation>
    <scope>NUCLEOTIDE SEQUENCE [LARGE SCALE GENOMIC DNA]</scope>
    <source>
        <strain>ATCC 17616 / 249</strain>
    </source>
</reference>
<reference key="2">
    <citation type="submission" date="2007-04" db="EMBL/GenBank/DDBJ databases">
        <title>Complete genome sequence of Burkholderia multivorans ATCC 17616.</title>
        <authorList>
            <person name="Ohtsubo Y."/>
            <person name="Yamashita A."/>
            <person name="Kurokawa K."/>
            <person name="Takami H."/>
            <person name="Yuhara S."/>
            <person name="Nishiyama E."/>
            <person name="Endo R."/>
            <person name="Miyazaki R."/>
            <person name="Ono A."/>
            <person name="Yano K."/>
            <person name="Ito M."/>
            <person name="Sota M."/>
            <person name="Yuji N."/>
            <person name="Hattori M."/>
            <person name="Tsuda M."/>
        </authorList>
    </citation>
    <scope>NUCLEOTIDE SEQUENCE [LARGE SCALE GENOMIC DNA]</scope>
    <source>
        <strain>ATCC 17616 / 249</strain>
    </source>
</reference>
<comment type="function">
    <text evidence="1">One of the primary rRNA binding proteins, it binds directly to 16S rRNA central domain where it helps coordinate assembly of the platform of the 30S subunit.</text>
</comment>
<comment type="subunit">
    <text evidence="1">Part of the 30S ribosomal subunit. Contacts proteins S5 and S12.</text>
</comment>
<comment type="similarity">
    <text evidence="1">Belongs to the universal ribosomal protein uS8 family.</text>
</comment>
<name>RS8_BURM1</name>
<protein>
    <recommendedName>
        <fullName evidence="1">Small ribosomal subunit protein uS8</fullName>
    </recommendedName>
    <alternativeName>
        <fullName evidence="2">30S ribosomal protein S8</fullName>
    </alternativeName>
</protein>